<proteinExistence type="evidence at protein level"/>
<dbReference type="EMBL" id="AF040630">
    <property type="protein sequence ID" value="AAC39634.1"/>
    <property type="molecule type" value="mRNA"/>
</dbReference>
<dbReference type="EMBL" id="AF080586">
    <property type="protein sequence ID" value="AAD08671.1"/>
    <property type="molecule type" value="mRNA"/>
</dbReference>
<dbReference type="EMBL" id="AF058762">
    <property type="protein sequence ID" value="AAC18118.1"/>
    <property type="molecule type" value="Genomic_DNA"/>
</dbReference>
<dbReference type="EMBL" id="AF042782">
    <property type="protein sequence ID" value="AAC36587.1"/>
    <property type="molecule type" value="Genomic_DNA"/>
</dbReference>
<dbReference type="EMBL" id="EF577401">
    <property type="protein sequence ID" value="ABQ52421.1"/>
    <property type="molecule type" value="mRNA"/>
</dbReference>
<dbReference type="EMBL" id="CH471099">
    <property type="protein sequence ID" value="EAW89364.1"/>
    <property type="molecule type" value="Genomic_DNA"/>
</dbReference>
<dbReference type="EMBL" id="BC069130">
    <property type="protein sequence ID" value="AAH69130.1"/>
    <property type="molecule type" value="mRNA"/>
</dbReference>
<dbReference type="EMBL" id="BC074914">
    <property type="protein sequence ID" value="AAH74914.1"/>
    <property type="molecule type" value="mRNA"/>
</dbReference>
<dbReference type="EMBL" id="BC074915">
    <property type="protein sequence ID" value="AAH74915.1"/>
    <property type="molecule type" value="mRNA"/>
</dbReference>
<dbReference type="EMBL" id="BC109051">
    <property type="protein sequence ID" value="AAI09052.1"/>
    <property type="molecule type" value="mRNA"/>
</dbReference>
<dbReference type="EMBL" id="BC109052">
    <property type="protein sequence ID" value="AAI09053.1"/>
    <property type="molecule type" value="mRNA"/>
</dbReference>
<dbReference type="CCDS" id="CCDS11739.1"/>
<dbReference type="PIR" id="JC5949">
    <property type="entry name" value="JC5949"/>
</dbReference>
<dbReference type="RefSeq" id="NP_003848.1">
    <property type="nucleotide sequence ID" value="NM_003857.4"/>
</dbReference>
<dbReference type="PDB" id="7WQ4">
    <property type="method" value="EM"/>
    <property type="resolution" value="2.60 A"/>
    <property type="chains" value="R=1-387"/>
</dbReference>
<dbReference type="PDB" id="7XBD">
    <property type="method" value="EM"/>
    <property type="resolution" value="3.11 A"/>
    <property type="chains" value="A=1-387"/>
</dbReference>
<dbReference type="PDB" id="7XJK">
    <property type="method" value="EM"/>
    <property type="resolution" value="3.30 A"/>
    <property type="chains" value="F=1-314"/>
</dbReference>
<dbReference type="PDB" id="7XJL">
    <property type="method" value="EM"/>
    <property type="resolution" value="3.50 A"/>
    <property type="chains" value="F=1-314"/>
</dbReference>
<dbReference type="PDBsum" id="7WQ4"/>
<dbReference type="PDBsum" id="7XBD"/>
<dbReference type="PDBsum" id="7XJK"/>
<dbReference type="PDBsum" id="7XJL"/>
<dbReference type="EMDB" id="EMD-32699"/>
<dbReference type="EMDB" id="EMD-33103"/>
<dbReference type="EMDB" id="EMD-33230"/>
<dbReference type="EMDB" id="EMD-33231"/>
<dbReference type="SMR" id="O43603"/>
<dbReference type="BioGRID" id="114338">
    <property type="interactions" value="1"/>
</dbReference>
<dbReference type="FunCoup" id="O43603">
    <property type="interactions" value="711"/>
</dbReference>
<dbReference type="IntAct" id="O43603">
    <property type="interactions" value="2"/>
</dbReference>
<dbReference type="STRING" id="9606.ENSP00000329684"/>
<dbReference type="BindingDB" id="O43603"/>
<dbReference type="ChEMBL" id="CHEMBL3176"/>
<dbReference type="GuidetoPHARMACOLOGY" id="244"/>
<dbReference type="GlyCosmos" id="O43603">
    <property type="glycosylation" value="2 sites, No reported glycans"/>
</dbReference>
<dbReference type="GlyGen" id="O43603">
    <property type="glycosylation" value="2 sites"/>
</dbReference>
<dbReference type="iPTMnet" id="O43603"/>
<dbReference type="PhosphoSitePlus" id="O43603"/>
<dbReference type="BioMuta" id="GALR2"/>
<dbReference type="MassIVE" id="O43603"/>
<dbReference type="PaxDb" id="9606-ENSP00000329684"/>
<dbReference type="PeptideAtlas" id="O43603"/>
<dbReference type="Antibodypedia" id="19663">
    <property type="antibodies" value="298 antibodies from 36 providers"/>
</dbReference>
<dbReference type="DNASU" id="8811"/>
<dbReference type="Ensembl" id="ENST00000329003.4">
    <property type="protein sequence ID" value="ENSP00000329684.3"/>
    <property type="gene ID" value="ENSG00000182687.4"/>
</dbReference>
<dbReference type="GeneID" id="8811"/>
<dbReference type="KEGG" id="hsa:8811"/>
<dbReference type="MANE-Select" id="ENST00000329003.4">
    <property type="protein sequence ID" value="ENSP00000329684.3"/>
    <property type="RefSeq nucleotide sequence ID" value="NM_003857.4"/>
    <property type="RefSeq protein sequence ID" value="NP_003848.1"/>
</dbReference>
<dbReference type="UCSC" id="uc002jqm.3">
    <property type="organism name" value="human"/>
</dbReference>
<dbReference type="AGR" id="HGNC:4133"/>
<dbReference type="CTD" id="8811"/>
<dbReference type="DisGeNET" id="8811"/>
<dbReference type="GeneCards" id="GALR2"/>
<dbReference type="HGNC" id="HGNC:4133">
    <property type="gene designation" value="GALR2"/>
</dbReference>
<dbReference type="HPA" id="ENSG00000182687">
    <property type="expression patterns" value="Tissue enriched (intestine)"/>
</dbReference>
<dbReference type="MalaCards" id="GALR2"/>
<dbReference type="MIM" id="603691">
    <property type="type" value="gene"/>
</dbReference>
<dbReference type="neXtProt" id="NX_O43603"/>
<dbReference type="OpenTargets" id="ENSG00000182687"/>
<dbReference type="PharmGKB" id="PA28546"/>
<dbReference type="VEuPathDB" id="HostDB:ENSG00000182687"/>
<dbReference type="eggNOG" id="KOG3656">
    <property type="taxonomic scope" value="Eukaryota"/>
</dbReference>
<dbReference type="GeneTree" id="ENSGT01130000278323"/>
<dbReference type="HOGENOM" id="CLU_009579_6_4_1"/>
<dbReference type="InParanoid" id="O43603"/>
<dbReference type="OMA" id="LTYTRTI"/>
<dbReference type="OrthoDB" id="5964776at2759"/>
<dbReference type="PAN-GO" id="O43603">
    <property type="GO annotations" value="4 GO annotations based on evolutionary models"/>
</dbReference>
<dbReference type="PhylomeDB" id="O43603"/>
<dbReference type="TreeFam" id="TF315737"/>
<dbReference type="PathwayCommons" id="O43603"/>
<dbReference type="Reactome" id="R-HSA-375276">
    <property type="pathway name" value="Peptide ligand-binding receptors"/>
</dbReference>
<dbReference type="Reactome" id="R-HSA-418594">
    <property type="pathway name" value="G alpha (i) signalling events"/>
</dbReference>
<dbReference type="SignaLink" id="O43603"/>
<dbReference type="SIGNOR" id="O43603"/>
<dbReference type="BioGRID-ORCS" id="8811">
    <property type="hits" value="18 hits in 1144 CRISPR screens"/>
</dbReference>
<dbReference type="GeneWiki" id="Galanin_receptor_2"/>
<dbReference type="GenomeRNAi" id="8811"/>
<dbReference type="Pharos" id="O43603">
    <property type="development level" value="Tchem"/>
</dbReference>
<dbReference type="PRO" id="PR:O43603"/>
<dbReference type="Proteomes" id="UP000005640">
    <property type="component" value="Chromosome 17"/>
</dbReference>
<dbReference type="RNAct" id="O43603">
    <property type="molecule type" value="protein"/>
</dbReference>
<dbReference type="Bgee" id="ENSG00000182687">
    <property type="expression patterns" value="Expressed in muscle layer of sigmoid colon and 62 other cell types or tissues"/>
</dbReference>
<dbReference type="GO" id="GO:0005929">
    <property type="term" value="C:cilium"/>
    <property type="evidence" value="ECO:0000314"/>
    <property type="project" value="MGI"/>
</dbReference>
<dbReference type="GO" id="GO:0016020">
    <property type="term" value="C:membrane"/>
    <property type="evidence" value="ECO:0000304"/>
    <property type="project" value="ProtInc"/>
</dbReference>
<dbReference type="GO" id="GO:0005886">
    <property type="term" value="C:plasma membrane"/>
    <property type="evidence" value="ECO:0000318"/>
    <property type="project" value="GO_Central"/>
</dbReference>
<dbReference type="GO" id="GO:0004966">
    <property type="term" value="F:galanin receptor activity"/>
    <property type="evidence" value="ECO:0000314"/>
    <property type="project" value="UniProtKB"/>
</dbReference>
<dbReference type="GO" id="GO:0042923">
    <property type="term" value="F:neuropeptide binding"/>
    <property type="evidence" value="ECO:0007669"/>
    <property type="project" value="Ensembl"/>
</dbReference>
<dbReference type="GO" id="GO:0017046">
    <property type="term" value="F:peptide hormone binding"/>
    <property type="evidence" value="ECO:0000314"/>
    <property type="project" value="UniProtKB"/>
</dbReference>
<dbReference type="GO" id="GO:0007189">
    <property type="term" value="P:adenylate cyclase-activating G protein-coupled receptor signaling pathway"/>
    <property type="evidence" value="ECO:0007669"/>
    <property type="project" value="Ensembl"/>
</dbReference>
<dbReference type="GO" id="GO:0007188">
    <property type="term" value="P:adenylate cyclase-modulating G protein-coupled receptor signaling pathway"/>
    <property type="evidence" value="ECO:0000318"/>
    <property type="project" value="GO_Central"/>
</dbReference>
<dbReference type="GO" id="GO:0007166">
    <property type="term" value="P:cell surface receptor signaling pathway"/>
    <property type="evidence" value="ECO:0000304"/>
    <property type="project" value="ProtInc"/>
</dbReference>
<dbReference type="GO" id="GO:0007631">
    <property type="term" value="P:feeding behavior"/>
    <property type="evidence" value="ECO:0000304"/>
    <property type="project" value="ProtInc"/>
</dbReference>
<dbReference type="GO" id="GO:0090663">
    <property type="term" value="P:galanin-activated signaling pathway"/>
    <property type="evidence" value="ECO:0000314"/>
    <property type="project" value="GO_Central"/>
</dbReference>
<dbReference type="GO" id="GO:0043647">
    <property type="term" value="P:inositol phosphate metabolic process"/>
    <property type="evidence" value="ECO:0007669"/>
    <property type="project" value="Ensembl"/>
</dbReference>
<dbReference type="GO" id="GO:0007611">
    <property type="term" value="P:learning or memory"/>
    <property type="evidence" value="ECO:0000304"/>
    <property type="project" value="ProtInc"/>
</dbReference>
<dbReference type="GO" id="GO:0006936">
    <property type="term" value="P:muscle contraction"/>
    <property type="evidence" value="ECO:0000304"/>
    <property type="project" value="ProtInc"/>
</dbReference>
<dbReference type="GO" id="GO:0031175">
    <property type="term" value="P:neuron projection development"/>
    <property type="evidence" value="ECO:0007669"/>
    <property type="project" value="Ensembl"/>
</dbReference>
<dbReference type="GO" id="GO:0007218">
    <property type="term" value="P:neuropeptide signaling pathway"/>
    <property type="evidence" value="ECO:0000318"/>
    <property type="project" value="GO_Central"/>
</dbReference>
<dbReference type="GO" id="GO:0046488">
    <property type="term" value="P:phosphatidylinositol metabolic process"/>
    <property type="evidence" value="ECO:0007669"/>
    <property type="project" value="Ensembl"/>
</dbReference>
<dbReference type="GO" id="GO:0007200">
    <property type="term" value="P:phospholipase C-activating G protein-coupled receptor signaling pathway"/>
    <property type="evidence" value="ECO:0000314"/>
    <property type="project" value="GO_Central"/>
</dbReference>
<dbReference type="GO" id="GO:0007204">
    <property type="term" value="P:positive regulation of cytosolic calcium ion concentration"/>
    <property type="evidence" value="ECO:0000304"/>
    <property type="project" value="ProtInc"/>
</dbReference>
<dbReference type="GO" id="GO:1902608">
    <property type="term" value="P:positive regulation of large conductance calcium-activated potassium channel activity"/>
    <property type="evidence" value="ECO:0000315"/>
    <property type="project" value="UniProtKB"/>
</dbReference>
<dbReference type="GO" id="GO:0045944">
    <property type="term" value="P:positive regulation of transcription by RNA polymerase II"/>
    <property type="evidence" value="ECO:0000314"/>
    <property type="project" value="UniProtKB"/>
</dbReference>
<dbReference type="CDD" id="cd15097">
    <property type="entry name" value="7tmA_Gal2_Gal3_R"/>
    <property type="match status" value="1"/>
</dbReference>
<dbReference type="FunFam" id="1.20.1070.10:FF:000092">
    <property type="entry name" value="Galanin receptor type 2"/>
    <property type="match status" value="1"/>
</dbReference>
<dbReference type="Gene3D" id="1.20.1070.10">
    <property type="entry name" value="Rhodopsin 7-helix transmembrane proteins"/>
    <property type="match status" value="1"/>
</dbReference>
<dbReference type="InterPro" id="IPR003907">
    <property type="entry name" value="GAL2_rcpt"/>
</dbReference>
<dbReference type="InterPro" id="IPR000405">
    <property type="entry name" value="Galanin_rcpt"/>
</dbReference>
<dbReference type="InterPro" id="IPR000276">
    <property type="entry name" value="GPCR_Rhodpsn"/>
</dbReference>
<dbReference type="InterPro" id="IPR017452">
    <property type="entry name" value="GPCR_Rhodpsn_7TM"/>
</dbReference>
<dbReference type="PANTHER" id="PTHR45695:SF35">
    <property type="entry name" value="GALANIN RECEPTOR TYPE 2-LIKE ISOFORM X2"/>
    <property type="match status" value="1"/>
</dbReference>
<dbReference type="PANTHER" id="PTHR45695">
    <property type="entry name" value="LEUCOKININ RECEPTOR-RELATED"/>
    <property type="match status" value="1"/>
</dbReference>
<dbReference type="Pfam" id="PF00001">
    <property type="entry name" value="7tm_1"/>
    <property type="match status" value="1"/>
</dbReference>
<dbReference type="PRINTS" id="PR01419">
    <property type="entry name" value="GALANIN2R"/>
</dbReference>
<dbReference type="PRINTS" id="PR00663">
    <property type="entry name" value="GALANINR"/>
</dbReference>
<dbReference type="PRINTS" id="PR00237">
    <property type="entry name" value="GPCRRHODOPSN"/>
</dbReference>
<dbReference type="SMART" id="SM01381">
    <property type="entry name" value="7TM_GPCR_Srsx"/>
    <property type="match status" value="1"/>
</dbReference>
<dbReference type="SUPFAM" id="SSF81321">
    <property type="entry name" value="Family A G protein-coupled receptor-like"/>
    <property type="match status" value="1"/>
</dbReference>
<dbReference type="PROSITE" id="PS00237">
    <property type="entry name" value="G_PROTEIN_RECEP_F1_1"/>
    <property type="match status" value="1"/>
</dbReference>
<dbReference type="PROSITE" id="PS50262">
    <property type="entry name" value="G_PROTEIN_RECEP_F1_2"/>
    <property type="match status" value="1"/>
</dbReference>
<feature type="chain" id="PRO_0000069466" description="Galanin receptor type 2">
    <location>
        <begin position="1"/>
        <end position="387"/>
    </location>
</feature>
<feature type="topological domain" description="Extracellular" evidence="1">
    <location>
        <begin position="1"/>
        <end position="28"/>
    </location>
</feature>
<feature type="transmembrane region" description="Helical; Name=1" evidence="1">
    <location>
        <begin position="29"/>
        <end position="49"/>
    </location>
</feature>
<feature type="topological domain" description="Cytoplasmic" evidence="1">
    <location>
        <begin position="50"/>
        <end position="60"/>
    </location>
</feature>
<feature type="transmembrane region" description="Helical; Name=2" evidence="1">
    <location>
        <begin position="61"/>
        <end position="81"/>
    </location>
</feature>
<feature type="topological domain" description="Extracellular" evidence="1">
    <location>
        <begin position="82"/>
        <end position="99"/>
    </location>
</feature>
<feature type="transmembrane region" description="Helical; Name=3" evidence="1">
    <location>
        <begin position="100"/>
        <end position="121"/>
    </location>
</feature>
<feature type="topological domain" description="Cytoplasmic" evidence="1">
    <location>
        <begin position="122"/>
        <end position="141"/>
    </location>
</feature>
<feature type="transmembrane region" description="Helical; Name=4" evidence="1">
    <location>
        <begin position="142"/>
        <end position="162"/>
    </location>
</feature>
<feature type="topological domain" description="Extracellular" evidence="1">
    <location>
        <begin position="163"/>
        <end position="187"/>
    </location>
</feature>
<feature type="transmembrane region" description="Helical; Name=5" evidence="1">
    <location>
        <begin position="188"/>
        <end position="208"/>
    </location>
</feature>
<feature type="topological domain" description="Cytoplasmic" evidence="1">
    <location>
        <begin position="209"/>
        <end position="237"/>
    </location>
</feature>
<feature type="transmembrane region" description="Helical; Name=6" evidence="1">
    <location>
        <begin position="238"/>
        <end position="258"/>
    </location>
</feature>
<feature type="topological domain" description="Extracellular" evidence="1">
    <location>
        <begin position="259"/>
        <end position="260"/>
    </location>
</feature>
<feature type="transmembrane region" description="Helical; Name=7" evidence="1">
    <location>
        <begin position="261"/>
        <end position="281"/>
    </location>
</feature>
<feature type="topological domain" description="Cytoplasmic" evidence="1">
    <location>
        <begin position="282"/>
        <end position="387"/>
    </location>
</feature>
<feature type="glycosylation site" description="N-linked (GlcNAc...) asparagine" evidence="1">
    <location>
        <position position="2"/>
    </location>
</feature>
<feature type="glycosylation site" description="N-linked (GlcNAc...) asparagine" evidence="1">
    <location>
        <position position="11"/>
    </location>
</feature>
<feature type="disulfide bond" evidence="2">
    <location>
        <begin position="98"/>
        <end position="175"/>
    </location>
</feature>
<feature type="turn" evidence="9">
    <location>
        <begin position="23"/>
        <end position="25"/>
    </location>
</feature>
<feature type="helix" evidence="9">
    <location>
        <begin position="27"/>
        <end position="51"/>
    </location>
</feature>
<feature type="strand" evidence="9">
    <location>
        <begin position="52"/>
        <end position="54"/>
    </location>
</feature>
<feature type="helix" evidence="9">
    <location>
        <begin position="59"/>
        <end position="87"/>
    </location>
</feature>
<feature type="strand" evidence="9">
    <location>
        <begin position="88"/>
        <end position="90"/>
    </location>
</feature>
<feature type="helix" evidence="9">
    <location>
        <begin position="96"/>
        <end position="99"/>
    </location>
</feature>
<feature type="helix" evidence="9">
    <location>
        <begin position="101"/>
        <end position="128"/>
    </location>
</feature>
<feature type="turn" evidence="9">
    <location>
        <begin position="130"/>
        <end position="136"/>
    </location>
</feature>
<feature type="helix" evidence="9">
    <location>
        <begin position="139"/>
        <end position="157"/>
    </location>
</feature>
<feature type="helix" evidence="9">
    <location>
        <begin position="160"/>
        <end position="163"/>
    </location>
</feature>
<feature type="strand" evidence="9">
    <location>
        <begin position="164"/>
        <end position="169"/>
    </location>
</feature>
<feature type="strand" evidence="9">
    <location>
        <begin position="172"/>
        <end position="176"/>
    </location>
</feature>
<feature type="helix" evidence="9">
    <location>
        <begin position="181"/>
        <end position="195"/>
    </location>
</feature>
<feature type="helix" evidence="9">
    <location>
        <begin position="197"/>
        <end position="214"/>
    </location>
</feature>
<feature type="helix" evidence="9">
    <location>
        <begin position="225"/>
        <end position="248"/>
    </location>
</feature>
<feature type="helix" evidence="9">
    <location>
        <begin position="250"/>
        <end position="261"/>
    </location>
</feature>
<feature type="helix" evidence="9">
    <location>
        <begin position="268"/>
        <end position="292"/>
    </location>
</feature>
<feature type="turn" evidence="9">
    <location>
        <begin position="293"/>
        <end position="295"/>
    </location>
</feature>
<feature type="helix" evidence="9">
    <location>
        <begin position="297"/>
        <end position="300"/>
    </location>
</feature>
<feature type="helix" evidence="9">
    <location>
        <begin position="303"/>
        <end position="306"/>
    </location>
</feature>
<evidence type="ECO:0000255" key="1"/>
<evidence type="ECO:0000255" key="2">
    <source>
        <dbReference type="PROSITE-ProRule" id="PRU00521"/>
    </source>
</evidence>
<evidence type="ECO:0000269" key="3">
    <source>
    </source>
</evidence>
<evidence type="ECO:0000269" key="4">
    <source>
    </source>
</evidence>
<evidence type="ECO:0000269" key="5">
    <source>
    </source>
</evidence>
<evidence type="ECO:0000269" key="6">
    <source>
    </source>
</evidence>
<evidence type="ECO:0000269" key="7">
    <source>
    </source>
</evidence>
<evidence type="ECO:0000269" key="8">
    <source>
    </source>
</evidence>
<evidence type="ECO:0007829" key="9">
    <source>
        <dbReference type="PDB" id="7WQ4"/>
    </source>
</evidence>
<reference key="1">
    <citation type="journal article" date="1998" name="Biochem. Biophys. Res. Commun.">
        <title>Cloning and expression of the human galanin receptor GalR2.</title>
        <authorList>
            <person name="Bloomquist B.T."/>
            <person name="Beauchamp M.R."/>
            <person name="Zhelnin L."/>
            <person name="Brown S.-E."/>
            <person name="Gore-Willse A.R."/>
            <person name="Gregor P."/>
            <person name="Cornfield L.J."/>
        </authorList>
    </citation>
    <scope>NUCLEOTIDE SEQUENCE [MRNA]</scope>
    <scope>FUNCTION</scope>
</reference>
<reference key="2">
    <citation type="journal article" date="1998" name="Peptides">
        <title>Cloning and characterization of the human galanin GALR2 receptor.</title>
        <authorList>
            <person name="Borowsky B."/>
            <person name="Walker M.W."/>
            <person name="Huang L.-Y."/>
            <person name="Jones K.A."/>
            <person name="Smith K.E."/>
            <person name="Bard J."/>
            <person name="Branchek T.A."/>
            <person name="Gerald C."/>
        </authorList>
    </citation>
    <scope>NUCLEOTIDE SEQUENCE [MRNA]</scope>
    <scope>FUNCTION</scope>
</reference>
<reference key="3">
    <citation type="journal article" date="1998" name="Brain Res. Mol. Brain Res.">
        <title>Molecular characterization, pharmacological properties and chromosomal localization of the human GALR2 galanin receptor.</title>
        <authorList>
            <person name="Fathi Z."/>
            <person name="Battaglino P.M."/>
            <person name="Iben L.G."/>
            <person name="Li H."/>
            <person name="Baker E."/>
            <person name="Zhang D."/>
            <person name="McGovern R."/>
            <person name="Mahle C.D."/>
            <person name="Sutherland G.R."/>
            <person name="Iismaa T.P."/>
            <person name="Dickinson K.E.J."/>
            <person name="Zimanyi I.A."/>
        </authorList>
    </citation>
    <scope>NUCLEOTIDE SEQUENCE [GENOMIC DNA]</scope>
    <scope>FUNCTION</scope>
</reference>
<reference key="4">
    <citation type="journal article" date="1998" name="J. Neurochem.">
        <title>Molecular characterization and expression of cloned human galanin receptors GALR2 and GALR3.</title>
        <authorList>
            <person name="Kolakowski L.F. Jr."/>
            <person name="O'Neill G.P."/>
            <person name="Howard A.D."/>
            <person name="Broussard S.R."/>
            <person name="Sullivan K.A."/>
            <person name="Feighner S.D."/>
            <person name="Sawzdargo M."/>
            <person name="Nguyen T."/>
            <person name="Kargman S."/>
            <person name="Shiao L.-L."/>
            <person name="Hreniuk D.L."/>
            <person name="Tan C.P."/>
            <person name="Evans J."/>
            <person name="Abramovitz M."/>
            <person name="Chateauneuf A."/>
            <person name="Coulombe N."/>
            <person name="Ng G."/>
            <person name="Johnson M.P."/>
            <person name="Tharian A."/>
            <person name="Khoshbouei H."/>
            <person name="George S.R."/>
            <person name="Smith R.G."/>
            <person name="O'Dowd B.F."/>
        </authorList>
    </citation>
    <scope>NUCLEOTIDE SEQUENCE [GENOMIC DNA]</scope>
    <scope>FUNCTION</scope>
</reference>
<reference key="5">
    <citation type="submission" date="2007-04" db="EMBL/GenBank/DDBJ databases">
        <authorList>
            <person name="Martin A.L."/>
            <person name="Kaighin V.A."/>
            <person name="Aronstam R.S."/>
        </authorList>
    </citation>
    <scope>NUCLEOTIDE SEQUENCE [MRNA]</scope>
    <source>
        <tissue>Hippocampus</tissue>
    </source>
</reference>
<reference key="6">
    <citation type="submission" date="2005-07" db="EMBL/GenBank/DDBJ databases">
        <authorList>
            <person name="Mural R.J."/>
            <person name="Istrail S."/>
            <person name="Sutton G.G."/>
            <person name="Florea L."/>
            <person name="Halpern A.L."/>
            <person name="Mobarry C.M."/>
            <person name="Lippert R."/>
            <person name="Walenz B."/>
            <person name="Shatkay H."/>
            <person name="Dew I."/>
            <person name="Miller J.R."/>
            <person name="Flanigan M.J."/>
            <person name="Edwards N.J."/>
            <person name="Bolanos R."/>
            <person name="Fasulo D."/>
            <person name="Halldorsson B.V."/>
            <person name="Hannenhalli S."/>
            <person name="Turner R."/>
            <person name="Yooseph S."/>
            <person name="Lu F."/>
            <person name="Nusskern D.R."/>
            <person name="Shue B.C."/>
            <person name="Zheng X.H."/>
            <person name="Zhong F."/>
            <person name="Delcher A.L."/>
            <person name="Huson D.H."/>
            <person name="Kravitz S.A."/>
            <person name="Mouchard L."/>
            <person name="Reinert K."/>
            <person name="Remington K.A."/>
            <person name="Clark A.G."/>
            <person name="Waterman M.S."/>
            <person name="Eichler E.E."/>
            <person name="Adams M.D."/>
            <person name="Hunkapiller M.W."/>
            <person name="Myers E.W."/>
            <person name="Venter J.C."/>
        </authorList>
    </citation>
    <scope>NUCLEOTIDE SEQUENCE [LARGE SCALE GENOMIC DNA]</scope>
</reference>
<reference key="7">
    <citation type="journal article" date="2004" name="Genome Res.">
        <title>The status, quality, and expansion of the NIH full-length cDNA project: the Mammalian Gene Collection (MGC).</title>
        <authorList>
            <consortium name="The MGC Project Team"/>
        </authorList>
    </citation>
    <scope>NUCLEOTIDE SEQUENCE [LARGE SCALE MRNA]</scope>
</reference>
<reference key="8">
    <citation type="journal article" date="2014" name="Endocrinology">
        <title>Coevolution of the spexin/galanin/kisspeptin family: Spexin activates galanin receptor type II and III.</title>
        <authorList>
            <person name="Kim D.K."/>
            <person name="Yun S."/>
            <person name="Son G.H."/>
            <person name="Hwang J.I."/>
            <person name="Park C.R."/>
            <person name="Kim J.I."/>
            <person name="Kim K."/>
            <person name="Vaudry H."/>
            <person name="Seong J.Y."/>
        </authorList>
    </citation>
    <scope>FUNCTION AS A RECEPTOR FOR SPEXIN-1</scope>
    <scope>PHYLOGENY</scope>
</reference>
<reference key="9">
    <citation type="journal article" date="2015" name="Hum. Mol. Genet.">
        <title>Galanin pathogenic mutations in temporal lobe epilepsy.</title>
        <authorList>
            <person name="Guipponi M."/>
            <person name="Chentouf A."/>
            <person name="Webling K.E."/>
            <person name="Freimann K."/>
            <person name="Crespel A."/>
            <person name="Nobile C."/>
            <person name="Lemke J.R."/>
            <person name="Hansen J."/>
            <person name="Dorn T."/>
            <person name="Lesca G."/>
            <person name="Ryvlin P."/>
            <person name="Hirsch E."/>
            <person name="Rudolf G."/>
            <person name="Rosenberg D.S."/>
            <person name="Weber Y."/>
            <person name="Becker F."/>
            <person name="Helbig I."/>
            <person name="Muhle H."/>
            <person name="Salzmann A."/>
            <person name="Chaouch M."/>
            <person name="Oubaiche M.L."/>
            <person name="Ziglio S."/>
            <person name="Gehrig C."/>
            <person name="Santoni F."/>
            <person name="Pizzato M."/>
            <person name="Langel U."/>
            <person name="Antonarakis S.E."/>
        </authorList>
    </citation>
    <scope>FUNCTION</scope>
</reference>
<accession>O43603</accession>
<accession>A5JUU4</accession>
<accession>Q32MN8</accession>
<organism>
    <name type="scientific">Homo sapiens</name>
    <name type="common">Human</name>
    <dbReference type="NCBI Taxonomy" id="9606"/>
    <lineage>
        <taxon>Eukaryota</taxon>
        <taxon>Metazoa</taxon>
        <taxon>Chordata</taxon>
        <taxon>Craniata</taxon>
        <taxon>Vertebrata</taxon>
        <taxon>Euteleostomi</taxon>
        <taxon>Mammalia</taxon>
        <taxon>Eutheria</taxon>
        <taxon>Euarchontoglires</taxon>
        <taxon>Primates</taxon>
        <taxon>Haplorrhini</taxon>
        <taxon>Catarrhini</taxon>
        <taxon>Hominidae</taxon>
        <taxon>Homo</taxon>
    </lineage>
</organism>
<gene>
    <name type="primary">GALR2</name>
    <name type="synonym">GALNR2</name>
</gene>
<comment type="function">
    <text evidence="3 4 5 6 7 8">Receptor for the hormone galanin and GALP. Receptor for the hormone spexin-1 (PubMed:24517231). The activity of this receptor is mediated by G proteins that activate the phospholipase C/protein kinase C pathway (via G(q)) and that inhibit adenylyl cyclase (via G(i)).</text>
</comment>
<comment type="interaction">
    <interactant intactId="EBI-6624855">
        <id>O43603</id>
    </interactant>
    <interactant intactId="EBI-6624800">
        <id>PRO_0000010449</id>
        <label>GAL</label>
        <dbReference type="UniProtKB" id="P22466"/>
    </interactant>
    <organismsDiffer>false</organismsDiffer>
    <experiments>2</experiments>
</comment>
<comment type="subcellular location">
    <subcellularLocation>
        <location>Cell membrane</location>
        <topology>Multi-pass membrane protein</topology>
    </subcellularLocation>
</comment>
<comment type="tissue specificity">
    <text>Expressed abundantly within the central nervous system in both hypothalamus and hippocampus. In peripheral tissues, the strongest expression was observed in heart, kidney, liver, and small intestine.</text>
</comment>
<comment type="similarity">
    <text evidence="2">Belongs to the G-protein coupled receptor 1 family.</text>
</comment>
<keyword id="KW-0002">3D-structure</keyword>
<keyword id="KW-1003">Cell membrane</keyword>
<keyword id="KW-1015">Disulfide bond</keyword>
<keyword id="KW-0297">G-protein coupled receptor</keyword>
<keyword id="KW-0325">Glycoprotein</keyword>
<keyword id="KW-0472">Membrane</keyword>
<keyword id="KW-1267">Proteomics identification</keyword>
<keyword id="KW-0675">Receptor</keyword>
<keyword id="KW-1185">Reference proteome</keyword>
<keyword id="KW-0807">Transducer</keyword>
<keyword id="KW-0812">Transmembrane</keyword>
<keyword id="KW-1133">Transmembrane helix</keyword>
<name>GALR2_HUMAN</name>
<protein>
    <recommendedName>
        <fullName>Galanin receptor type 2</fullName>
        <shortName>GAL2-R</shortName>
        <shortName>GALR-2</shortName>
    </recommendedName>
</protein>
<sequence>MNVSGCPGAGNASQAGGGGGWHPEAVIVPLLFALIFLVGTVGNTLVLAVLLRGGQAVSTTNLFILNLGVADLCFILCCVPFQATIYTLDGWVFGSLLCKAVHFLIFLTMHASSFTLAAVSLDRYLAIRYPLHSRELRTPRNALAAIGLIWGLSLLFSGPYLSYYRQSQLANLTVCHPAWSAPRRRAMDICTFVFSYLLPVLVLGLTYARTLRYLWRAVDPVAAGSGARRAKRKVTRMILIVAALFCLCWMPHHALILCVWFGQFPLTRATYALRILSHLVSYANSCVNPIVYALVSKHFRKGFRTICAGLLGRAPGRASGRVCAAARGTHSGSVLERESSDLLHMSEAAGALRPCPGASQPCILEPCPGPSWQGPKAGDSILTVDVA</sequence>